<feature type="chain" id="PRO_0000306817" description="Putative transcription factor kapC">
    <location>
        <begin position="1"/>
        <end position="284"/>
    </location>
</feature>
<feature type="domain" description="bZIP">
    <location>
        <begin position="102"/>
        <end position="165"/>
    </location>
</feature>
<feature type="region of interest" description="Disordered" evidence="2">
    <location>
        <begin position="1"/>
        <end position="121"/>
    </location>
</feature>
<feature type="region of interest" description="Basic motif" evidence="1">
    <location>
        <begin position="103"/>
        <end position="126"/>
    </location>
</feature>
<feature type="region of interest" description="Leucine-zipper" evidence="1">
    <location>
        <begin position="130"/>
        <end position="161"/>
    </location>
</feature>
<feature type="region of interest" description="Disordered" evidence="2">
    <location>
        <begin position="174"/>
        <end position="284"/>
    </location>
</feature>
<feature type="compositionally biased region" description="Pro residues" evidence="2">
    <location>
        <begin position="1"/>
        <end position="10"/>
    </location>
</feature>
<feature type="compositionally biased region" description="Low complexity" evidence="2">
    <location>
        <begin position="26"/>
        <end position="40"/>
    </location>
</feature>
<feature type="compositionally biased region" description="Pro residues" evidence="2">
    <location>
        <begin position="41"/>
        <end position="54"/>
    </location>
</feature>
<feature type="compositionally biased region" description="Polar residues" evidence="2">
    <location>
        <begin position="57"/>
        <end position="67"/>
    </location>
</feature>
<feature type="compositionally biased region" description="Low complexity" evidence="2">
    <location>
        <begin position="108"/>
        <end position="118"/>
    </location>
</feature>
<feature type="compositionally biased region" description="Low complexity" evidence="2">
    <location>
        <begin position="193"/>
        <end position="222"/>
    </location>
</feature>
<sequence>MQPTLAPAPHPSMQTSAQDHADQVLHDQLLAAHQHLSHPQQPRPQPPAAQPPHMQPNTTSPRDQNNIDPAISGAAMLSGPPQTPPQPEPTGQESPKTYGKRPLSTSKRAAQNRAAQRAFRQRKESYIRKLEEQVKEFDTMSEAFKALQAENYQLREYIINLQSRLLESQGEVPELPGNIDLSQPRTDLNVPQPGAGPATTSSSAPAPPSGAQQAQPPQGAASNDDMNSLNRIAVAGLGMRKHPNEEANYLGNNFTGRRTRPDETQADSEVTKTEQAPHGLPMVS</sequence>
<accession>Q2UNX4</accession>
<keyword id="KW-0238">DNA-binding</keyword>
<keyword id="KW-0539">Nucleus</keyword>
<keyword id="KW-1185">Reference proteome</keyword>
<keyword id="KW-0804">Transcription</keyword>
<keyword id="KW-0805">Transcription regulation</keyword>
<comment type="function">
    <text evidence="1">Putative transcription factor.</text>
</comment>
<comment type="subcellular location">
    <subcellularLocation>
        <location evidence="1">Nucleus</location>
    </subcellularLocation>
</comment>
<comment type="similarity">
    <text evidence="3">Belongs to the bZIP family.</text>
</comment>
<comment type="sequence caution" evidence="3">
    <conflict type="erroneous gene model prediction">
        <sequence resource="EMBL-CDS" id="BAE56741"/>
    </conflict>
</comment>
<comment type="sequence caution" evidence="3">
    <conflict type="erroneous gene model prediction">
        <sequence resource="EMBL-CDS" id="BAE92564"/>
    </conflict>
</comment>
<dbReference type="EMBL" id="AB255129">
    <property type="protein sequence ID" value="BAE92564.1"/>
    <property type="status" value="ALT_SEQ"/>
    <property type="molecule type" value="Genomic_DNA"/>
</dbReference>
<dbReference type="EMBL" id="BA000050">
    <property type="protein sequence ID" value="BAE56741.1"/>
    <property type="status" value="ALT_SEQ"/>
    <property type="molecule type" value="Genomic_DNA"/>
</dbReference>
<dbReference type="RefSeq" id="XP_001818743.2">
    <property type="nucleotide sequence ID" value="XM_001818691.2"/>
</dbReference>
<dbReference type="SMR" id="Q2UNX4"/>
<dbReference type="EnsemblFungi" id="BAE56741">
    <property type="protein sequence ID" value="BAE56741"/>
    <property type="gene ID" value="AO090001000194"/>
</dbReference>
<dbReference type="GeneID" id="5990714"/>
<dbReference type="KEGG" id="aor:AO090001000194"/>
<dbReference type="VEuPathDB" id="FungiDB:AO090001000194"/>
<dbReference type="OMA" id="PHMQPNT"/>
<dbReference type="Proteomes" id="UP000006564">
    <property type="component" value="Chromosome 2"/>
</dbReference>
<dbReference type="GO" id="GO:0090575">
    <property type="term" value="C:RNA polymerase II transcription regulator complex"/>
    <property type="evidence" value="ECO:0007669"/>
    <property type="project" value="TreeGrafter"/>
</dbReference>
<dbReference type="GO" id="GO:0001228">
    <property type="term" value="F:DNA-binding transcription activator activity, RNA polymerase II-specific"/>
    <property type="evidence" value="ECO:0007669"/>
    <property type="project" value="TreeGrafter"/>
</dbReference>
<dbReference type="GO" id="GO:0000976">
    <property type="term" value="F:transcription cis-regulatory region binding"/>
    <property type="evidence" value="ECO:0007669"/>
    <property type="project" value="InterPro"/>
</dbReference>
<dbReference type="Gene3D" id="1.20.5.170">
    <property type="match status" value="1"/>
</dbReference>
<dbReference type="InterPro" id="IPR050936">
    <property type="entry name" value="AP-1-like"/>
</dbReference>
<dbReference type="InterPro" id="IPR004827">
    <property type="entry name" value="bZIP"/>
</dbReference>
<dbReference type="InterPro" id="IPR046347">
    <property type="entry name" value="bZIP_sf"/>
</dbReference>
<dbReference type="PANTHER" id="PTHR40621">
    <property type="entry name" value="TRANSCRIPTION FACTOR KAPC-RELATED"/>
    <property type="match status" value="1"/>
</dbReference>
<dbReference type="PANTHER" id="PTHR40621:SF11">
    <property type="entry name" value="TRANSCRIPTION FACTOR KAPC-RELATED"/>
    <property type="match status" value="1"/>
</dbReference>
<dbReference type="Pfam" id="PF00170">
    <property type="entry name" value="bZIP_1"/>
    <property type="match status" value="1"/>
</dbReference>
<dbReference type="SMART" id="SM00338">
    <property type="entry name" value="BRLZ"/>
    <property type="match status" value="1"/>
</dbReference>
<dbReference type="SUPFAM" id="SSF57959">
    <property type="entry name" value="Leucine zipper domain"/>
    <property type="match status" value="1"/>
</dbReference>
<dbReference type="PROSITE" id="PS00036">
    <property type="entry name" value="BZIP_BASIC"/>
    <property type="match status" value="1"/>
</dbReference>
<evidence type="ECO:0000250" key="1"/>
<evidence type="ECO:0000256" key="2">
    <source>
        <dbReference type="SAM" id="MobiDB-lite"/>
    </source>
</evidence>
<evidence type="ECO:0000305" key="3"/>
<organism>
    <name type="scientific">Aspergillus oryzae (strain ATCC 42149 / RIB 40)</name>
    <name type="common">Yellow koji mold</name>
    <dbReference type="NCBI Taxonomy" id="510516"/>
    <lineage>
        <taxon>Eukaryota</taxon>
        <taxon>Fungi</taxon>
        <taxon>Dikarya</taxon>
        <taxon>Ascomycota</taxon>
        <taxon>Pezizomycotina</taxon>
        <taxon>Eurotiomycetes</taxon>
        <taxon>Eurotiomycetidae</taxon>
        <taxon>Eurotiales</taxon>
        <taxon>Aspergillaceae</taxon>
        <taxon>Aspergillus</taxon>
        <taxon>Aspergillus subgen. Circumdati</taxon>
    </lineage>
</organism>
<reference key="1">
    <citation type="submission" date="2006-03" db="EMBL/GenBank/DDBJ databases">
        <title>Oxidative stress in A. oryzae.</title>
        <authorList>
            <person name="Kotake M."/>
            <person name="Sakamoto K."/>
            <person name="Yamada O."/>
            <person name="Akita O."/>
        </authorList>
    </citation>
    <scope>NUCLEOTIDE SEQUENCE [GENOMIC DNA]</scope>
</reference>
<reference key="2">
    <citation type="journal article" date="2005" name="Nature">
        <title>Genome sequencing and analysis of Aspergillus oryzae.</title>
        <authorList>
            <person name="Machida M."/>
            <person name="Asai K."/>
            <person name="Sano M."/>
            <person name="Tanaka T."/>
            <person name="Kumagai T."/>
            <person name="Terai G."/>
            <person name="Kusumoto K."/>
            <person name="Arima T."/>
            <person name="Akita O."/>
            <person name="Kashiwagi Y."/>
            <person name="Abe K."/>
            <person name="Gomi K."/>
            <person name="Horiuchi H."/>
            <person name="Kitamoto K."/>
            <person name="Kobayashi T."/>
            <person name="Takeuchi M."/>
            <person name="Denning D.W."/>
            <person name="Galagan J.E."/>
            <person name="Nierman W.C."/>
            <person name="Yu J."/>
            <person name="Archer D.B."/>
            <person name="Bennett J.W."/>
            <person name="Bhatnagar D."/>
            <person name="Cleveland T.E."/>
            <person name="Fedorova N.D."/>
            <person name="Gotoh O."/>
            <person name="Horikawa H."/>
            <person name="Hosoyama A."/>
            <person name="Ichinomiya M."/>
            <person name="Igarashi R."/>
            <person name="Iwashita K."/>
            <person name="Juvvadi P.R."/>
            <person name="Kato M."/>
            <person name="Kato Y."/>
            <person name="Kin T."/>
            <person name="Kokubun A."/>
            <person name="Maeda H."/>
            <person name="Maeyama N."/>
            <person name="Maruyama J."/>
            <person name="Nagasaki H."/>
            <person name="Nakajima T."/>
            <person name="Oda K."/>
            <person name="Okada K."/>
            <person name="Paulsen I."/>
            <person name="Sakamoto K."/>
            <person name="Sawano T."/>
            <person name="Takahashi M."/>
            <person name="Takase K."/>
            <person name="Terabayashi Y."/>
            <person name="Wortman J.R."/>
            <person name="Yamada O."/>
            <person name="Yamagata Y."/>
            <person name="Anazawa H."/>
            <person name="Hata Y."/>
            <person name="Koide Y."/>
            <person name="Komori T."/>
            <person name="Koyama Y."/>
            <person name="Minetoki T."/>
            <person name="Suharnan S."/>
            <person name="Tanaka A."/>
            <person name="Isono K."/>
            <person name="Kuhara S."/>
            <person name="Ogasawara N."/>
            <person name="Kikuchi H."/>
        </authorList>
    </citation>
    <scope>NUCLEOTIDE SEQUENCE [LARGE SCALE GENOMIC DNA]</scope>
    <source>
        <strain>ATCC 42149 / RIB 40</strain>
    </source>
</reference>
<proteinExistence type="inferred from homology"/>
<protein>
    <recommendedName>
        <fullName>Putative transcription factor kapC</fullName>
    </recommendedName>
</protein>
<gene>
    <name type="primary">kapC</name>
    <name type="ORF">AO090001000194</name>
</gene>
<name>KAPC_ASPOR</name>